<protein>
    <recommendedName>
        <fullName>SNF1-related protein kinase regulatory subunit gamma-1-like</fullName>
    </recommendedName>
    <alternativeName>
        <fullName>AKIN subunit gamma-1-like</fullName>
    </alternativeName>
    <alternativeName>
        <fullName>CBS domain-containing protein CBSCBS2</fullName>
    </alternativeName>
</protein>
<name>KINGL_ARATH</name>
<sequence length="447" mass="47818">MAGSEAVEDKEIKSAVSSCEAYFEKVQSRKNLPKSLQETLNSAFAGIPVSSFPQVPGGRVIEIQAETPVSEAVKILSDSKILSAPVINTDHESSLDWRERYLGIIDYSSIILWVLESAELAAIALSATSATAAGVGAGAVGALGVAALGMTGPVAAAGLAAAAVGAAVAGGVAAERGIGKDAPTAADKLGKDFYEVILQEEPFKSTTVRTILKSFRWAPFLPVSTESSMLSVMLLLSKYRLRNVPVIKTGEPDIKNYVTQSAVVHGLEGCKGRDWFDHISALPISDLGLPFMSPNEVISIESEELILEAFKRMRDNNIGGLPVVEGLNKKIVGNISMRDIRYLLLQPEVFSNFRQLTVKSFATKIATAGEEYGLAIPAITCRPDSTLGSVINSLASRSVHRVYVAAGDENELYGVITLRDVISCFVSEPPNYFENCLGFSVKEMLNR</sequence>
<keyword id="KW-0007">Acetylation</keyword>
<keyword id="KW-0025">Alternative splicing</keyword>
<keyword id="KW-0119">Carbohydrate metabolism</keyword>
<keyword id="KW-0129">CBS domain</keyword>
<keyword id="KW-0597">Phosphoprotein</keyword>
<keyword id="KW-1185">Reference proteome</keyword>
<keyword id="KW-0677">Repeat</keyword>
<gene>
    <name type="primary">CBSCBS2</name>
    <name type="ordered locus">At1g69800</name>
    <name type="ORF">T17F3.17</name>
</gene>
<comment type="function">
    <text evidence="1">Regulatory subunit of the probable trimeric SNF1-related protein kinase (SnRK) complex, which may play a role in a signal transduction cascade regulating gene expression and carbohydrate metabolism in higher plants.</text>
</comment>
<comment type="subunit">
    <text evidence="1">Subunit of a probable heterotrimeric complex consisting of an alpha catalytic (KIN10 or KIN11) subunit, and a beta (KINB) and a gamma (KING or SNF4) non-catalytic regulatory subunits.</text>
</comment>
<comment type="alternative products">
    <event type="alternative splicing"/>
    <isoform>
        <id>Q9CAR3-1</id>
        <name>1</name>
        <sequence type="displayed"/>
    </isoform>
    <isoform>
        <id>Q9CAR3-2</id>
        <name>2</name>
        <sequence type="described" ref="VSP_041655"/>
    </isoform>
</comment>
<comment type="similarity">
    <text evidence="4">Belongs to the 5'-AMP-activated protein kinase gamma subunit family.</text>
</comment>
<proteinExistence type="evidence at protein level"/>
<accession>Q9CAR3</accession>
<accession>A8MQK6</accession>
<dbReference type="EMBL" id="AC010675">
    <property type="protein sequence ID" value="AAG52563.1"/>
    <property type="molecule type" value="Genomic_DNA"/>
</dbReference>
<dbReference type="EMBL" id="CP002684">
    <property type="protein sequence ID" value="AEE34976.1"/>
    <property type="molecule type" value="Genomic_DNA"/>
</dbReference>
<dbReference type="EMBL" id="CP002684">
    <property type="protein sequence ID" value="AEE34977.1"/>
    <property type="molecule type" value="Genomic_DNA"/>
</dbReference>
<dbReference type="EMBL" id="BT033072">
    <property type="protein sequence ID" value="ACE82595.1"/>
    <property type="molecule type" value="mRNA"/>
</dbReference>
<dbReference type="EMBL" id="AK317462">
    <property type="protein sequence ID" value="BAH20128.1"/>
    <property type="molecule type" value="mRNA"/>
</dbReference>
<dbReference type="PIR" id="B96720">
    <property type="entry name" value="B96720"/>
</dbReference>
<dbReference type="RefSeq" id="NP_001077801.1">
    <molecule id="Q9CAR3-2"/>
    <property type="nucleotide sequence ID" value="NM_001084332.1"/>
</dbReference>
<dbReference type="RefSeq" id="NP_564975.2">
    <molecule id="Q9CAR3-1"/>
    <property type="nucleotide sequence ID" value="NM_105648.4"/>
</dbReference>
<dbReference type="SMR" id="Q9CAR3"/>
<dbReference type="FunCoup" id="Q9CAR3">
    <property type="interactions" value="183"/>
</dbReference>
<dbReference type="STRING" id="3702.Q9CAR3"/>
<dbReference type="iPTMnet" id="Q9CAR3"/>
<dbReference type="PaxDb" id="3702-AT1G69800.2"/>
<dbReference type="ProteomicsDB" id="238222">
    <molecule id="Q9CAR3-1"/>
</dbReference>
<dbReference type="EnsemblPlants" id="AT1G69800.1">
    <molecule id="Q9CAR3-1"/>
    <property type="protein sequence ID" value="AT1G69800.1"/>
    <property type="gene ID" value="AT1G69800"/>
</dbReference>
<dbReference type="EnsemblPlants" id="AT1G69800.2">
    <molecule id="Q9CAR3-2"/>
    <property type="protein sequence ID" value="AT1G69800.2"/>
    <property type="gene ID" value="AT1G69800"/>
</dbReference>
<dbReference type="GeneID" id="843316"/>
<dbReference type="Gramene" id="AT1G69800.1">
    <molecule id="Q9CAR3-1"/>
    <property type="protein sequence ID" value="AT1G69800.1"/>
    <property type="gene ID" value="AT1G69800"/>
</dbReference>
<dbReference type="Gramene" id="AT1G69800.2">
    <molecule id="Q9CAR3-2"/>
    <property type="protein sequence ID" value="AT1G69800.2"/>
    <property type="gene ID" value="AT1G69800"/>
</dbReference>
<dbReference type="KEGG" id="ath:AT1G69800"/>
<dbReference type="Araport" id="AT1G69800"/>
<dbReference type="TAIR" id="AT1G69800"/>
<dbReference type="eggNOG" id="KOG1764">
    <property type="taxonomic scope" value="Eukaryota"/>
</dbReference>
<dbReference type="HOGENOM" id="CLU_036145_0_0_1"/>
<dbReference type="InParanoid" id="Q9CAR3"/>
<dbReference type="OMA" id="IYEPPGY"/>
<dbReference type="OrthoDB" id="449052at2759"/>
<dbReference type="PhylomeDB" id="Q9CAR3"/>
<dbReference type="PRO" id="PR:Q9CAR3"/>
<dbReference type="Proteomes" id="UP000006548">
    <property type="component" value="Chromosome 1"/>
</dbReference>
<dbReference type="ExpressionAtlas" id="Q9CAR3">
    <property type="expression patterns" value="baseline and differential"/>
</dbReference>
<dbReference type="GO" id="GO:0005739">
    <property type="term" value="C:mitochondrion"/>
    <property type="evidence" value="ECO:0007005"/>
    <property type="project" value="TAIR"/>
</dbReference>
<dbReference type="CDD" id="cd02205">
    <property type="entry name" value="CBS_pair_SF"/>
    <property type="match status" value="1"/>
</dbReference>
<dbReference type="Gene3D" id="3.10.580.10">
    <property type="entry name" value="CBS-domain"/>
    <property type="match status" value="2"/>
</dbReference>
<dbReference type="InterPro" id="IPR050511">
    <property type="entry name" value="AMPK_gamma/SDS23_families"/>
</dbReference>
<dbReference type="InterPro" id="IPR000644">
    <property type="entry name" value="CBS_dom"/>
</dbReference>
<dbReference type="InterPro" id="IPR046342">
    <property type="entry name" value="CBS_dom_sf"/>
</dbReference>
<dbReference type="PANTHER" id="PTHR13780">
    <property type="entry name" value="AMP-ACTIVATED PROTEIN KINASE, GAMMA REGULATORY SUBUNIT"/>
    <property type="match status" value="1"/>
</dbReference>
<dbReference type="PANTHER" id="PTHR13780:SF47">
    <property type="entry name" value="SNF1-RELATED PROTEIN KINASE REGULATORY SUBUNIT GAMMA-1-LIKE"/>
    <property type="match status" value="1"/>
</dbReference>
<dbReference type="Pfam" id="PF00571">
    <property type="entry name" value="CBS"/>
    <property type="match status" value="2"/>
</dbReference>
<dbReference type="SMART" id="SM00116">
    <property type="entry name" value="CBS"/>
    <property type="match status" value="4"/>
</dbReference>
<dbReference type="SUPFAM" id="SSF54631">
    <property type="entry name" value="CBS-domain pair"/>
    <property type="match status" value="2"/>
</dbReference>
<dbReference type="PROSITE" id="PS51371">
    <property type="entry name" value="CBS"/>
    <property type="match status" value="4"/>
</dbReference>
<feature type="initiator methionine" description="Removed" evidence="5">
    <location>
        <position position="1"/>
    </location>
</feature>
<feature type="chain" id="PRO_0000412194" description="SNF1-related protein kinase regulatory subunit gamma-1-like">
    <location>
        <begin position="2"/>
        <end position="447"/>
    </location>
</feature>
<feature type="domain" description="CBS 1" evidence="3">
    <location>
        <begin position="54"/>
        <end position="120"/>
    </location>
</feature>
<feature type="domain" description="CBS 2" evidence="3">
    <location>
        <begin position="214"/>
        <end position="275"/>
    </location>
</feature>
<feature type="domain" description="CBS 3" evidence="3">
    <location>
        <begin position="292"/>
        <end position="350"/>
    </location>
</feature>
<feature type="domain" description="CBS 4" evidence="3">
    <location>
        <begin position="374"/>
        <end position="433"/>
    </location>
</feature>
<feature type="modified residue" description="N-acetylalanine" evidence="5">
    <location>
        <position position="2"/>
    </location>
</feature>
<feature type="modified residue" description="Phosphoserine" evidence="2">
    <location>
        <position position="35"/>
    </location>
</feature>
<feature type="splice variant" id="VSP_041655" description="In isoform 2." evidence="4">
    <original>M</original>
    <variation>MHFIRTRVTARKAKPKICLKFFKLSRYQDM</variation>
    <location>
        <position position="1"/>
    </location>
</feature>
<organism>
    <name type="scientific">Arabidopsis thaliana</name>
    <name type="common">Mouse-ear cress</name>
    <dbReference type="NCBI Taxonomy" id="3702"/>
    <lineage>
        <taxon>Eukaryota</taxon>
        <taxon>Viridiplantae</taxon>
        <taxon>Streptophyta</taxon>
        <taxon>Embryophyta</taxon>
        <taxon>Tracheophyta</taxon>
        <taxon>Spermatophyta</taxon>
        <taxon>Magnoliopsida</taxon>
        <taxon>eudicotyledons</taxon>
        <taxon>Gunneridae</taxon>
        <taxon>Pentapetalae</taxon>
        <taxon>rosids</taxon>
        <taxon>malvids</taxon>
        <taxon>Brassicales</taxon>
        <taxon>Brassicaceae</taxon>
        <taxon>Camelineae</taxon>
        <taxon>Arabidopsis</taxon>
    </lineage>
</organism>
<evidence type="ECO:0000250" key="1"/>
<evidence type="ECO:0000250" key="2">
    <source>
        <dbReference type="UniProtKB" id="Q8LBB2"/>
    </source>
</evidence>
<evidence type="ECO:0000255" key="3">
    <source>
        <dbReference type="PROSITE-ProRule" id="PRU00703"/>
    </source>
</evidence>
<evidence type="ECO:0000305" key="4"/>
<evidence type="ECO:0007744" key="5">
    <source>
    </source>
</evidence>
<reference key="1">
    <citation type="journal article" date="2000" name="Nature">
        <title>Sequence and analysis of chromosome 1 of the plant Arabidopsis thaliana.</title>
        <authorList>
            <person name="Theologis A."/>
            <person name="Ecker J.R."/>
            <person name="Palm C.J."/>
            <person name="Federspiel N.A."/>
            <person name="Kaul S."/>
            <person name="White O."/>
            <person name="Alonso J."/>
            <person name="Altafi H."/>
            <person name="Araujo R."/>
            <person name="Bowman C.L."/>
            <person name="Brooks S.Y."/>
            <person name="Buehler E."/>
            <person name="Chan A."/>
            <person name="Chao Q."/>
            <person name="Chen H."/>
            <person name="Cheuk R.F."/>
            <person name="Chin C.W."/>
            <person name="Chung M.K."/>
            <person name="Conn L."/>
            <person name="Conway A.B."/>
            <person name="Conway A.R."/>
            <person name="Creasy T.H."/>
            <person name="Dewar K."/>
            <person name="Dunn P."/>
            <person name="Etgu P."/>
            <person name="Feldblyum T.V."/>
            <person name="Feng J.-D."/>
            <person name="Fong B."/>
            <person name="Fujii C.Y."/>
            <person name="Gill J.E."/>
            <person name="Goldsmith A.D."/>
            <person name="Haas B."/>
            <person name="Hansen N.F."/>
            <person name="Hughes B."/>
            <person name="Huizar L."/>
            <person name="Hunter J.L."/>
            <person name="Jenkins J."/>
            <person name="Johnson-Hopson C."/>
            <person name="Khan S."/>
            <person name="Khaykin E."/>
            <person name="Kim C.J."/>
            <person name="Koo H.L."/>
            <person name="Kremenetskaia I."/>
            <person name="Kurtz D.B."/>
            <person name="Kwan A."/>
            <person name="Lam B."/>
            <person name="Langin-Hooper S."/>
            <person name="Lee A."/>
            <person name="Lee J.M."/>
            <person name="Lenz C.A."/>
            <person name="Li J.H."/>
            <person name="Li Y.-P."/>
            <person name="Lin X."/>
            <person name="Liu S.X."/>
            <person name="Liu Z.A."/>
            <person name="Luros J.S."/>
            <person name="Maiti R."/>
            <person name="Marziali A."/>
            <person name="Militscher J."/>
            <person name="Miranda M."/>
            <person name="Nguyen M."/>
            <person name="Nierman W.C."/>
            <person name="Osborne B.I."/>
            <person name="Pai G."/>
            <person name="Peterson J."/>
            <person name="Pham P.K."/>
            <person name="Rizzo M."/>
            <person name="Rooney T."/>
            <person name="Rowley D."/>
            <person name="Sakano H."/>
            <person name="Salzberg S.L."/>
            <person name="Schwartz J.R."/>
            <person name="Shinn P."/>
            <person name="Southwick A.M."/>
            <person name="Sun H."/>
            <person name="Tallon L.J."/>
            <person name="Tambunga G."/>
            <person name="Toriumi M.J."/>
            <person name="Town C.D."/>
            <person name="Utterback T."/>
            <person name="Van Aken S."/>
            <person name="Vaysberg M."/>
            <person name="Vysotskaia V.S."/>
            <person name="Walker M."/>
            <person name="Wu D."/>
            <person name="Yu G."/>
            <person name="Fraser C.M."/>
            <person name="Venter J.C."/>
            <person name="Davis R.W."/>
        </authorList>
    </citation>
    <scope>NUCLEOTIDE SEQUENCE [LARGE SCALE GENOMIC DNA]</scope>
    <source>
        <strain>cv. Columbia</strain>
    </source>
</reference>
<reference key="2">
    <citation type="journal article" date="2017" name="Plant J.">
        <title>Araport11: a complete reannotation of the Arabidopsis thaliana reference genome.</title>
        <authorList>
            <person name="Cheng C.Y."/>
            <person name="Krishnakumar V."/>
            <person name="Chan A.P."/>
            <person name="Thibaud-Nissen F."/>
            <person name="Schobel S."/>
            <person name="Town C.D."/>
        </authorList>
    </citation>
    <scope>GENOME REANNOTATION</scope>
    <source>
        <strain>cv. Columbia</strain>
    </source>
</reference>
<reference key="3">
    <citation type="submission" date="2008-06" db="EMBL/GenBank/DDBJ databases">
        <title>Arabidopsis ORF clones.</title>
        <authorList>
            <person name="de los Reyes C."/>
            <person name="Quan R."/>
            <person name="Chen H."/>
            <person name="Bautista V."/>
            <person name="Kim C.J."/>
            <person name="Ecker J.R."/>
        </authorList>
    </citation>
    <scope>NUCLEOTIDE SEQUENCE [LARGE SCALE MRNA] (ISOFORM 1)</scope>
    <source>
        <strain>cv. Columbia</strain>
    </source>
</reference>
<reference key="4">
    <citation type="journal article" date="2009" name="DNA Res.">
        <title>Analysis of multiple occurrences of alternative splicing events in Arabidopsis thaliana using novel sequenced full-length cDNAs.</title>
        <authorList>
            <person name="Iida K."/>
            <person name="Fukami-Kobayashi K."/>
            <person name="Toyoda A."/>
            <person name="Sakaki Y."/>
            <person name="Kobayashi M."/>
            <person name="Seki M."/>
            <person name="Shinozaki K."/>
        </authorList>
    </citation>
    <scope>NUCLEOTIDE SEQUENCE [LARGE SCALE MRNA] (ISOFORM 1)</scope>
    <source>
        <strain>cv. Columbia</strain>
    </source>
</reference>
<reference key="5">
    <citation type="journal article" date="2009" name="BMC Genomics">
        <title>Genome wide expression analysis of CBS domain containing proteins in Arabidopsis thaliana (L.) Heynh and Oryza sativa L. reveals their developmental and stress regulation.</title>
        <authorList>
            <person name="Kushwaha H.R."/>
            <person name="Singh A.K."/>
            <person name="Sopory S.K."/>
            <person name="Singla-Pareek S.L."/>
            <person name="Pareek A."/>
        </authorList>
    </citation>
    <scope>GENE FAMILY</scope>
    <scope>NOMENCLATURE</scope>
</reference>
<reference key="6">
    <citation type="journal article" date="2012" name="Mol. Cell. Proteomics">
        <title>Comparative large-scale characterisation of plant vs. mammal proteins reveals similar and idiosyncratic N-alpha acetylation features.</title>
        <authorList>
            <person name="Bienvenut W.V."/>
            <person name="Sumpton D."/>
            <person name="Martinez A."/>
            <person name="Lilla S."/>
            <person name="Espagne C."/>
            <person name="Meinnel T."/>
            <person name="Giglione C."/>
        </authorList>
    </citation>
    <scope>ACETYLATION [LARGE SCALE ANALYSIS] AT ALA-2</scope>
    <scope>CLEAVAGE OF INITIATOR METHIONINE [LARGE SCALE ANALYSIS]</scope>
    <scope>IDENTIFICATION BY MASS SPECTROMETRY [LARGE SCALE ANALYSIS]</scope>
</reference>